<protein>
    <recommendedName>
        <fullName>Protein msa</fullName>
    </recommendedName>
    <alternativeName>
        <fullName>Modulator of SarA</fullName>
    </alternativeName>
</protein>
<gene>
    <name type="primary">msa</name>
    <name type="ordered locus">SAB1257c</name>
</gene>
<reference key="1">
    <citation type="journal article" date="2007" name="PLoS ONE">
        <title>Molecular correlates of host specialization in Staphylococcus aureus.</title>
        <authorList>
            <person name="Herron-Olson L."/>
            <person name="Fitzgerald J.R."/>
            <person name="Musser J.M."/>
            <person name="Kapur V."/>
        </authorList>
    </citation>
    <scope>NUCLEOTIDE SEQUENCE [LARGE SCALE GENOMIC DNA]</scope>
    <source>
        <strain>bovine RF122 / ET3-1</strain>
    </source>
</reference>
<comment type="function">
    <text evidence="1">Accessory element involved in the expression of sarA and several virulence factors. Modulates SarA production and/or function in a strain-dependent manner. Affects the transcription of the accessory gene regulator (agr) and genes encoding virulence factors including alpha toxin (hla) and protein A (spa) (By similarity).</text>
</comment>
<comment type="subcellular location">
    <subcellularLocation>
        <location evidence="3">Cell membrane</location>
        <topology evidence="3">Multi-pass membrane protein</topology>
    </subcellularLocation>
</comment>
<evidence type="ECO:0000250" key="1"/>
<evidence type="ECO:0000255" key="2"/>
<evidence type="ECO:0000305" key="3"/>
<keyword id="KW-1003">Cell membrane</keyword>
<keyword id="KW-0472">Membrane</keyword>
<keyword id="KW-0812">Transmembrane</keyword>
<keyword id="KW-1133">Transmembrane helix</keyword>
<name>MSA_STAAB</name>
<sequence length="133" mass="15566">MKYLILSLVANLLVFGVLSAIGLNINILAAMMMILVIPITISGILFFKTNLDKTYIFFNILFIDFYYYIYNVHLMALPRFNSYIKAEMMELEDIDVLITSKDFGFDEILFFTLYLLLILIILYYLKKQVKTKS</sequence>
<organism>
    <name type="scientific">Staphylococcus aureus (strain bovine RF122 / ET3-1)</name>
    <dbReference type="NCBI Taxonomy" id="273036"/>
    <lineage>
        <taxon>Bacteria</taxon>
        <taxon>Bacillati</taxon>
        <taxon>Bacillota</taxon>
        <taxon>Bacilli</taxon>
        <taxon>Bacillales</taxon>
        <taxon>Staphylococcaceae</taxon>
        <taxon>Staphylococcus</taxon>
    </lineage>
</organism>
<proteinExistence type="inferred from homology"/>
<dbReference type="EMBL" id="AJ938182">
    <property type="protein sequence ID" value="CAI80946.1"/>
    <property type="molecule type" value="Genomic_DNA"/>
</dbReference>
<dbReference type="RefSeq" id="WP_000876212.1">
    <property type="nucleotide sequence ID" value="NC_007622.1"/>
</dbReference>
<dbReference type="SMR" id="Q2YY17"/>
<dbReference type="KEGG" id="sab:SAB1257c"/>
<dbReference type="HOGENOM" id="CLU_157294_0_0_9"/>
<dbReference type="GO" id="GO:0005886">
    <property type="term" value="C:plasma membrane"/>
    <property type="evidence" value="ECO:0007669"/>
    <property type="project" value="UniProtKB-SubCell"/>
</dbReference>
<dbReference type="NCBIfam" id="NF038270">
    <property type="entry name" value="membran_MsaC"/>
    <property type="match status" value="1"/>
</dbReference>
<accession>Q2YY17</accession>
<feature type="chain" id="PRO_0000253057" description="Protein msa">
    <location>
        <begin position="1"/>
        <end position="133"/>
    </location>
</feature>
<feature type="transmembrane region" description="Helical" evidence="2">
    <location>
        <begin position="3"/>
        <end position="23"/>
    </location>
</feature>
<feature type="transmembrane region" description="Helical" evidence="2">
    <location>
        <begin position="27"/>
        <end position="47"/>
    </location>
</feature>
<feature type="transmembrane region" description="Helical" evidence="2">
    <location>
        <begin position="55"/>
        <end position="75"/>
    </location>
</feature>
<feature type="transmembrane region" description="Helical" evidence="2">
    <location>
        <begin position="103"/>
        <end position="123"/>
    </location>
</feature>